<feature type="chain" id="PRO_1000134462" description="Acetyl-coenzyme A carboxylase carboxyl transferase subunit alpha">
    <location>
        <begin position="1"/>
        <end position="323"/>
    </location>
</feature>
<feature type="domain" description="CoA carboxyltransferase C-terminal" evidence="2">
    <location>
        <begin position="39"/>
        <end position="293"/>
    </location>
</feature>
<comment type="function">
    <text evidence="1">Component of the acetyl coenzyme A carboxylase (ACC) complex. First, biotin carboxylase catalyzes the carboxylation of biotin on its carrier protein (BCCP) and then the CO(2) group is transferred by the carboxyltransferase to acetyl-CoA to form malonyl-CoA.</text>
</comment>
<comment type="catalytic activity">
    <reaction evidence="1">
        <text>N(6)-carboxybiotinyl-L-lysyl-[protein] + acetyl-CoA = N(6)-biotinyl-L-lysyl-[protein] + malonyl-CoA</text>
        <dbReference type="Rhea" id="RHEA:54728"/>
        <dbReference type="Rhea" id="RHEA-COMP:10505"/>
        <dbReference type="Rhea" id="RHEA-COMP:10506"/>
        <dbReference type="ChEBI" id="CHEBI:57288"/>
        <dbReference type="ChEBI" id="CHEBI:57384"/>
        <dbReference type="ChEBI" id="CHEBI:83144"/>
        <dbReference type="ChEBI" id="CHEBI:83145"/>
        <dbReference type="EC" id="2.1.3.15"/>
    </reaction>
</comment>
<comment type="pathway">
    <text evidence="1">Lipid metabolism; malonyl-CoA biosynthesis; malonyl-CoA from acetyl-CoA: step 1/1.</text>
</comment>
<comment type="subunit">
    <text evidence="1">Acetyl-CoA carboxylase is a heterohexamer composed of biotin carboxyl carrier protein (AccB), biotin carboxylase (AccC) and two subunits each of ACCase subunit alpha (AccA) and ACCase subunit beta (AccD).</text>
</comment>
<comment type="subcellular location">
    <subcellularLocation>
        <location evidence="1">Cytoplasm</location>
    </subcellularLocation>
</comment>
<comment type="similarity">
    <text evidence="1">Belongs to the AccA family.</text>
</comment>
<evidence type="ECO:0000255" key="1">
    <source>
        <dbReference type="HAMAP-Rule" id="MF_00823"/>
    </source>
</evidence>
<evidence type="ECO:0000255" key="2">
    <source>
        <dbReference type="PROSITE-ProRule" id="PRU01137"/>
    </source>
</evidence>
<sequence>MKTTFLDFEQPIAELEAKIEELRFVQDDSAVDISEEIERLSKKSQQLTKDLYANLSPWQVSQIARHPQRPYTLDYVAELFTDFHELHGDRAFADDLSIVGGLARFGGHPCMVIGHQKGRDTKERAARNFGMPRPEGYRKAERLMRLAEKFGLPIFTFVDTPGAYPGIGAEERGQSEAIGRNLYVMAELKTPIITTVIGEGGSGGALAIAVADTVMMLQFSTYSVISPEGCASILWKSAAKAPEAAEALGLTAHRLKALGLIDKIINEPLGGAHRDPKGMAALLRRALADSLRQFQGMSIDALRERRFERLMAYGKFKETTPGA</sequence>
<proteinExistence type="inferred from homology"/>
<keyword id="KW-0067">ATP-binding</keyword>
<keyword id="KW-0963">Cytoplasm</keyword>
<keyword id="KW-0275">Fatty acid biosynthesis</keyword>
<keyword id="KW-0276">Fatty acid metabolism</keyword>
<keyword id="KW-0444">Lipid biosynthesis</keyword>
<keyword id="KW-0443">Lipid metabolism</keyword>
<keyword id="KW-0547">Nucleotide-binding</keyword>
<keyword id="KW-0808">Transferase</keyword>
<gene>
    <name evidence="1" type="primary">accA</name>
    <name type="ordered locus">BamMC406_1981</name>
</gene>
<reference key="1">
    <citation type="submission" date="2008-04" db="EMBL/GenBank/DDBJ databases">
        <title>Complete sequence of chromosome 1 of Burkholderia ambifaria MC40-6.</title>
        <authorList>
            <person name="Copeland A."/>
            <person name="Lucas S."/>
            <person name="Lapidus A."/>
            <person name="Glavina del Rio T."/>
            <person name="Dalin E."/>
            <person name="Tice H."/>
            <person name="Pitluck S."/>
            <person name="Chain P."/>
            <person name="Malfatti S."/>
            <person name="Shin M."/>
            <person name="Vergez L."/>
            <person name="Lang D."/>
            <person name="Schmutz J."/>
            <person name="Larimer F."/>
            <person name="Land M."/>
            <person name="Hauser L."/>
            <person name="Kyrpides N."/>
            <person name="Lykidis A."/>
            <person name="Ramette A."/>
            <person name="Konstantinidis K."/>
            <person name="Tiedje J."/>
            <person name="Richardson P."/>
        </authorList>
    </citation>
    <scope>NUCLEOTIDE SEQUENCE [LARGE SCALE GENOMIC DNA]</scope>
    <source>
        <strain>MC40-6</strain>
    </source>
</reference>
<organism>
    <name type="scientific">Burkholderia ambifaria (strain MC40-6)</name>
    <dbReference type="NCBI Taxonomy" id="398577"/>
    <lineage>
        <taxon>Bacteria</taxon>
        <taxon>Pseudomonadati</taxon>
        <taxon>Pseudomonadota</taxon>
        <taxon>Betaproteobacteria</taxon>
        <taxon>Burkholderiales</taxon>
        <taxon>Burkholderiaceae</taxon>
        <taxon>Burkholderia</taxon>
        <taxon>Burkholderia cepacia complex</taxon>
    </lineage>
</organism>
<protein>
    <recommendedName>
        <fullName evidence="1">Acetyl-coenzyme A carboxylase carboxyl transferase subunit alpha</fullName>
        <shortName evidence="1">ACCase subunit alpha</shortName>
        <shortName evidence="1">Acetyl-CoA carboxylase carboxyltransferase subunit alpha</shortName>
        <ecNumber evidence="1">2.1.3.15</ecNumber>
    </recommendedName>
</protein>
<dbReference type="EC" id="2.1.3.15" evidence="1"/>
<dbReference type="EMBL" id="CP001025">
    <property type="protein sequence ID" value="ACB64462.1"/>
    <property type="molecule type" value="Genomic_DNA"/>
</dbReference>
<dbReference type="RefSeq" id="WP_006478433.1">
    <property type="nucleotide sequence ID" value="NC_010551.1"/>
</dbReference>
<dbReference type="SMR" id="B1YSM6"/>
<dbReference type="KEGG" id="bac:BamMC406_1981"/>
<dbReference type="HOGENOM" id="CLU_015486_0_2_4"/>
<dbReference type="OrthoDB" id="9808023at2"/>
<dbReference type="UniPathway" id="UPA00655">
    <property type="reaction ID" value="UER00711"/>
</dbReference>
<dbReference type="Proteomes" id="UP000001680">
    <property type="component" value="Chromosome 1"/>
</dbReference>
<dbReference type="GO" id="GO:0009317">
    <property type="term" value="C:acetyl-CoA carboxylase complex"/>
    <property type="evidence" value="ECO:0007669"/>
    <property type="project" value="InterPro"/>
</dbReference>
<dbReference type="GO" id="GO:0003989">
    <property type="term" value="F:acetyl-CoA carboxylase activity"/>
    <property type="evidence" value="ECO:0007669"/>
    <property type="project" value="InterPro"/>
</dbReference>
<dbReference type="GO" id="GO:0005524">
    <property type="term" value="F:ATP binding"/>
    <property type="evidence" value="ECO:0007669"/>
    <property type="project" value="UniProtKB-KW"/>
</dbReference>
<dbReference type="GO" id="GO:0016743">
    <property type="term" value="F:carboxyl- or carbamoyltransferase activity"/>
    <property type="evidence" value="ECO:0007669"/>
    <property type="project" value="UniProtKB-UniRule"/>
</dbReference>
<dbReference type="GO" id="GO:0006633">
    <property type="term" value="P:fatty acid biosynthetic process"/>
    <property type="evidence" value="ECO:0007669"/>
    <property type="project" value="UniProtKB-KW"/>
</dbReference>
<dbReference type="GO" id="GO:2001295">
    <property type="term" value="P:malonyl-CoA biosynthetic process"/>
    <property type="evidence" value="ECO:0007669"/>
    <property type="project" value="UniProtKB-UniRule"/>
</dbReference>
<dbReference type="Gene3D" id="3.90.226.10">
    <property type="entry name" value="2-enoyl-CoA Hydratase, Chain A, domain 1"/>
    <property type="match status" value="1"/>
</dbReference>
<dbReference type="HAMAP" id="MF_00823">
    <property type="entry name" value="AcetylCoA_CT_alpha"/>
    <property type="match status" value="1"/>
</dbReference>
<dbReference type="InterPro" id="IPR001095">
    <property type="entry name" value="Acetyl_CoA_COase_a_su"/>
</dbReference>
<dbReference type="InterPro" id="IPR029045">
    <property type="entry name" value="ClpP/crotonase-like_dom_sf"/>
</dbReference>
<dbReference type="InterPro" id="IPR011763">
    <property type="entry name" value="COA_CT_C"/>
</dbReference>
<dbReference type="NCBIfam" id="TIGR00513">
    <property type="entry name" value="accA"/>
    <property type="match status" value="1"/>
</dbReference>
<dbReference type="NCBIfam" id="NF041504">
    <property type="entry name" value="AccA_sub"/>
    <property type="match status" value="1"/>
</dbReference>
<dbReference type="NCBIfam" id="NF004344">
    <property type="entry name" value="PRK05724.1"/>
    <property type="match status" value="1"/>
</dbReference>
<dbReference type="PANTHER" id="PTHR42853">
    <property type="entry name" value="ACETYL-COENZYME A CARBOXYLASE CARBOXYL TRANSFERASE SUBUNIT ALPHA"/>
    <property type="match status" value="1"/>
</dbReference>
<dbReference type="PANTHER" id="PTHR42853:SF3">
    <property type="entry name" value="ACETYL-COENZYME A CARBOXYLASE CARBOXYL TRANSFERASE SUBUNIT ALPHA, CHLOROPLASTIC"/>
    <property type="match status" value="1"/>
</dbReference>
<dbReference type="Pfam" id="PF03255">
    <property type="entry name" value="ACCA"/>
    <property type="match status" value="1"/>
</dbReference>
<dbReference type="PRINTS" id="PR01069">
    <property type="entry name" value="ACCCTRFRASEA"/>
</dbReference>
<dbReference type="SUPFAM" id="SSF52096">
    <property type="entry name" value="ClpP/crotonase"/>
    <property type="match status" value="1"/>
</dbReference>
<dbReference type="PROSITE" id="PS50989">
    <property type="entry name" value="COA_CT_CTER"/>
    <property type="match status" value="1"/>
</dbReference>
<accession>B1YSM6</accession>
<name>ACCA_BURA4</name>